<proteinExistence type="inferred from homology"/>
<organism>
    <name type="scientific">Methanosarcina mazei (strain ATCC BAA-159 / DSM 3647 / Goe1 / Go1 / JCM 11833 / OCM 88)</name>
    <name type="common">Methanosarcina frisia</name>
    <dbReference type="NCBI Taxonomy" id="192952"/>
    <lineage>
        <taxon>Archaea</taxon>
        <taxon>Methanobacteriati</taxon>
        <taxon>Methanobacteriota</taxon>
        <taxon>Stenosarchaea group</taxon>
        <taxon>Methanomicrobia</taxon>
        <taxon>Methanosarcinales</taxon>
        <taxon>Methanosarcinaceae</taxon>
        <taxon>Methanosarcina</taxon>
    </lineage>
</organism>
<name>RL31_METMA</name>
<keyword id="KW-0687">Ribonucleoprotein</keyword>
<keyword id="KW-0689">Ribosomal protein</keyword>
<protein>
    <recommendedName>
        <fullName evidence="1">Large ribosomal subunit protein eL31</fullName>
    </recommendedName>
    <alternativeName>
        <fullName evidence="2">50S ribosomal protein L31e</fullName>
    </alternativeName>
</protein>
<feature type="chain" id="PRO_0000153796" description="Large ribosomal subunit protein eL31">
    <location>
        <begin position="1"/>
        <end position="93"/>
    </location>
</feature>
<comment type="similarity">
    <text evidence="1">Belongs to the eukaryotic ribosomal protein eL31 family.</text>
</comment>
<accession>Q8PYQ4</accession>
<reference key="1">
    <citation type="journal article" date="2002" name="J. Mol. Microbiol. Biotechnol.">
        <title>The genome of Methanosarcina mazei: evidence for lateral gene transfer between Bacteria and Archaea.</title>
        <authorList>
            <person name="Deppenmeier U."/>
            <person name="Johann A."/>
            <person name="Hartsch T."/>
            <person name="Merkl R."/>
            <person name="Schmitz R.A."/>
            <person name="Martinez-Arias R."/>
            <person name="Henne A."/>
            <person name="Wiezer A."/>
            <person name="Baeumer S."/>
            <person name="Jacobi C."/>
            <person name="Brueggemann H."/>
            <person name="Lienard T."/>
            <person name="Christmann A."/>
            <person name="Boemecke M."/>
            <person name="Steckel S."/>
            <person name="Bhattacharyya A."/>
            <person name="Lykidis A."/>
            <person name="Overbeek R."/>
            <person name="Klenk H.-P."/>
            <person name="Gunsalus R.P."/>
            <person name="Fritz H.-J."/>
            <person name="Gottschalk G."/>
        </authorList>
    </citation>
    <scope>NUCLEOTIDE SEQUENCE [LARGE SCALE GENOMIC DNA]</scope>
    <source>
        <strain>ATCC BAA-159 / DSM 3647 / Goe1 / Go1 / JCM 11833 / OCM 88</strain>
    </source>
</reference>
<dbReference type="EMBL" id="AE008384">
    <property type="protein sequence ID" value="AAM30502.1"/>
    <property type="molecule type" value="Genomic_DNA"/>
</dbReference>
<dbReference type="SMR" id="Q8PYQ4"/>
<dbReference type="KEGG" id="mma:MM_0806"/>
<dbReference type="PATRIC" id="fig|192952.21.peg.955"/>
<dbReference type="eggNOG" id="arCOG04473">
    <property type="taxonomic scope" value="Archaea"/>
</dbReference>
<dbReference type="HOGENOM" id="CLU_112570_3_2_2"/>
<dbReference type="Proteomes" id="UP000000595">
    <property type="component" value="Chromosome"/>
</dbReference>
<dbReference type="GO" id="GO:0022625">
    <property type="term" value="C:cytosolic large ribosomal subunit"/>
    <property type="evidence" value="ECO:0007669"/>
    <property type="project" value="TreeGrafter"/>
</dbReference>
<dbReference type="GO" id="GO:0003735">
    <property type="term" value="F:structural constituent of ribosome"/>
    <property type="evidence" value="ECO:0007669"/>
    <property type="project" value="InterPro"/>
</dbReference>
<dbReference type="GO" id="GO:0002181">
    <property type="term" value="P:cytoplasmic translation"/>
    <property type="evidence" value="ECO:0007669"/>
    <property type="project" value="TreeGrafter"/>
</dbReference>
<dbReference type="CDD" id="cd00463">
    <property type="entry name" value="Ribosomal_L31e"/>
    <property type="match status" value="1"/>
</dbReference>
<dbReference type="FunFam" id="3.10.440.10:FF:000004">
    <property type="entry name" value="50S ribosomal protein L31e"/>
    <property type="match status" value="1"/>
</dbReference>
<dbReference type="Gene3D" id="3.10.440.10">
    <property type="match status" value="1"/>
</dbReference>
<dbReference type="HAMAP" id="MF_00410">
    <property type="entry name" value="Ribosomal_eL31"/>
    <property type="match status" value="1"/>
</dbReference>
<dbReference type="InterPro" id="IPR000054">
    <property type="entry name" value="Ribosomal_eL31"/>
</dbReference>
<dbReference type="InterPro" id="IPR020052">
    <property type="entry name" value="Ribosomal_eL31_CS"/>
</dbReference>
<dbReference type="InterPro" id="IPR023621">
    <property type="entry name" value="Ribosomal_eL31_dom_sf"/>
</dbReference>
<dbReference type="NCBIfam" id="NF002258">
    <property type="entry name" value="PRK01192.1-1"/>
    <property type="match status" value="1"/>
</dbReference>
<dbReference type="PANTHER" id="PTHR10956">
    <property type="entry name" value="60S RIBOSOMAL PROTEIN L31"/>
    <property type="match status" value="1"/>
</dbReference>
<dbReference type="PANTHER" id="PTHR10956:SF0">
    <property type="entry name" value="60S RIBOSOMAL PROTEIN L31"/>
    <property type="match status" value="1"/>
</dbReference>
<dbReference type="Pfam" id="PF01198">
    <property type="entry name" value="Ribosomal_L31e"/>
    <property type="match status" value="1"/>
</dbReference>
<dbReference type="SMART" id="SM01380">
    <property type="entry name" value="Ribosomal_L31e"/>
    <property type="match status" value="1"/>
</dbReference>
<dbReference type="SUPFAM" id="SSF54575">
    <property type="entry name" value="Ribosomal protein L31e"/>
    <property type="match status" value="1"/>
</dbReference>
<dbReference type="PROSITE" id="PS01144">
    <property type="entry name" value="RIBOSOMAL_L31E"/>
    <property type="match status" value="1"/>
</dbReference>
<evidence type="ECO:0000255" key="1">
    <source>
        <dbReference type="HAMAP-Rule" id="MF_00410"/>
    </source>
</evidence>
<evidence type="ECO:0000305" key="2"/>
<gene>
    <name evidence="1" type="primary">rpl31e</name>
    <name type="ordered locus">MM_0806</name>
</gene>
<sequence>MVGKMADDMVKEQIYTIPLREVRKVPAWKRAGRAVKEVRGFLVRHMKTEAEQVKLDKTINECLWEKGCEKPPLSIRVRAVKFADGEVQAELAQ</sequence>